<protein>
    <recommendedName>
        <fullName evidence="1">Non-structural glycoprotein 4</fullName>
        <shortName evidence="1">NSP4</shortName>
    </recommendedName>
    <alternativeName>
        <fullName evidence="1">NCVP5</fullName>
    </alternativeName>
    <alternativeName>
        <fullName evidence="1">NS28</fullName>
    </alternativeName>
</protein>
<organismHost>
    <name type="scientific">Equus caballus</name>
    <name type="common">Horse</name>
    <dbReference type="NCBI Taxonomy" id="9796"/>
</organismHost>
<organism>
    <name type="scientific">Rotavirus A (isolate RVA/Equine/United Kingdom/H2/1976/G3P4[12])</name>
    <name type="common">RV-A</name>
    <name type="synonym">Rotavirus A (isolate H-2)</name>
    <dbReference type="NCBI Taxonomy" id="10939"/>
    <lineage>
        <taxon>Viruses</taxon>
        <taxon>Riboviria</taxon>
        <taxon>Orthornavirae</taxon>
        <taxon>Duplornaviricota</taxon>
        <taxon>Resentoviricetes</taxon>
        <taxon>Reovirales</taxon>
        <taxon>Sedoreoviridae</taxon>
        <taxon>Rotavirus</taxon>
        <taxon>Equine rotavirus</taxon>
    </lineage>
</organism>
<dbReference type="EMBL" id="AF144801">
    <property type="protein sequence ID" value="AAD50676.1"/>
    <property type="molecule type" value="Genomic_RNA"/>
</dbReference>
<dbReference type="GO" id="GO:0005576">
    <property type="term" value="C:extracellular region"/>
    <property type="evidence" value="ECO:0007669"/>
    <property type="project" value="UniProtKB-SubCell"/>
</dbReference>
<dbReference type="GO" id="GO:0044155">
    <property type="term" value="C:host caveola"/>
    <property type="evidence" value="ECO:0007669"/>
    <property type="project" value="UniProtKB-SubCell"/>
</dbReference>
<dbReference type="GO" id="GO:0044169">
    <property type="term" value="C:host cell rough endoplasmic reticulum membrane"/>
    <property type="evidence" value="ECO:0007669"/>
    <property type="project" value="UniProtKB-SubCell"/>
</dbReference>
<dbReference type="GO" id="GO:0016020">
    <property type="term" value="C:membrane"/>
    <property type="evidence" value="ECO:0007669"/>
    <property type="project" value="UniProtKB-UniRule"/>
</dbReference>
<dbReference type="GO" id="GO:0015267">
    <property type="term" value="F:channel activity"/>
    <property type="evidence" value="ECO:0007669"/>
    <property type="project" value="UniProtKB-KW"/>
</dbReference>
<dbReference type="GO" id="GO:0046872">
    <property type="term" value="F:metal ion binding"/>
    <property type="evidence" value="ECO:0007669"/>
    <property type="project" value="UniProtKB-UniRule"/>
</dbReference>
<dbReference type="GO" id="GO:0090729">
    <property type="term" value="F:toxin activity"/>
    <property type="evidence" value="ECO:0007669"/>
    <property type="project" value="UniProtKB-UniRule"/>
</dbReference>
<dbReference type="GO" id="GO:0034220">
    <property type="term" value="P:monoatomic ion transmembrane transport"/>
    <property type="evidence" value="ECO:0007669"/>
    <property type="project" value="UniProtKB-KW"/>
</dbReference>
<dbReference type="GO" id="GO:0039520">
    <property type="term" value="P:symbiont-mediated activation of host autophagy"/>
    <property type="evidence" value="ECO:0007669"/>
    <property type="project" value="UniProtKB-KW"/>
</dbReference>
<dbReference type="GO" id="GO:0016032">
    <property type="term" value="P:viral process"/>
    <property type="evidence" value="ECO:0007669"/>
    <property type="project" value="UniProtKB-UniRule"/>
</dbReference>
<dbReference type="Gene3D" id="1.20.5.430">
    <property type="match status" value="1"/>
</dbReference>
<dbReference type="HAMAP" id="MF_04091">
    <property type="entry name" value="ROTA_NSP4"/>
    <property type="match status" value="1"/>
</dbReference>
<dbReference type="InterPro" id="IPR002107">
    <property type="entry name" value="Rotavirus_NSP4"/>
</dbReference>
<dbReference type="Pfam" id="PF01452">
    <property type="entry name" value="Rota_NSP4"/>
    <property type="match status" value="1"/>
</dbReference>
<dbReference type="SUPFAM" id="SSF58030">
    <property type="entry name" value="Rotavirus nonstructural proteins"/>
    <property type="match status" value="1"/>
</dbReference>
<accession>Q9PYD2</accession>
<comment type="function">
    <text evidence="1">Plays an essential role in the virus replication cycle by acting as a viroporin. Creates a pore in the host endoplasmic reticulum and as a consequence releases Ca(2+) in the cytoplasm of infected cell. In turn, high levels of cytoplasmic calcium trigger membrane trafficking and transport of viral ER-associated proteins to viroplasms, sites of viral genome replication and immature particle assembly.</text>
</comment>
<comment type="function">
    <text evidence="1">The secreted form acts as an enterotoxin that causes phospholipase C-dependent elevation of the intracellular calcium concentration in host intestinal mucosa cells. Increased concentration of intracellular calcium disrupts the cytoskeleton and the tight junctions, raising the paracellular permeability. Potentiates chloride ion secretion through a calcium ion-dependent signaling pathway, inducing age-dependent diarrhea. To perform this enterotoxigenic role in vivo, NSP4 is released from infected enterocytes in a soluble form capable of diffusing within the intestinal lumen and interacting with host plasma membrane receptors on neighboring epithelial cells such as integrins ITGA1/ITGB1 and ITGA2/ITGB1.</text>
</comment>
<comment type="subunit">
    <text evidence="1">Homotetramer. Interacts with the immature particle in the viroplasm. Interacts with host CAV1, early and late in infection. Interacts with host integrin ITGA1/ITGB1 heterodimer. Interacts with host integrin ITGA2/ITGB1 heterodimer. Interaction with microtubules blocks trafficking to the Golgi apparatus.</text>
</comment>
<comment type="subcellular location">
    <subcellularLocation>
        <location evidence="1">Host rough endoplasmic reticulum membrane</location>
        <topology evidence="1">Single-pass type III membrane protein</topology>
    </subcellularLocation>
    <subcellularLocation>
        <location evidence="1">Host membrane</location>
        <location evidence="1">Host caveola</location>
        <topology evidence="1">Single-pass type III membrane protein</topology>
    </subcellularLocation>
    <subcellularLocation>
        <location evidence="1">Secreted</location>
    </subcellularLocation>
    <text evidence="1">NSP4 also localizes in vesicular structures which contain autophagosomal markers and associate with viroplasms in virus-infected cells. Additionally, a soluble form of glycosylated NSP4 is secreted despite retention of its transmembrane domain.</text>
</comment>
<comment type="domain">
    <text evidence="1">Binds 1 calcium ion per tetramer.</text>
</comment>
<comment type="PTM">
    <text evidence="1">The N-glycosyl content is primarily Man(9)GlcNAc, with a small amount of Man(8)GlcNAc.</text>
</comment>
<comment type="similarity">
    <text evidence="1">Belongs to the rotavirus NSP4 family.</text>
</comment>
<keyword id="KW-1072">Activation of host autophagy by virus</keyword>
<keyword id="KW-0106">Calcium</keyword>
<keyword id="KW-0260">Enterotoxin</keyword>
<keyword id="KW-0325">Glycoprotein</keyword>
<keyword id="KW-1038">Host endoplasmic reticulum</keyword>
<keyword id="KW-1043">Host membrane</keyword>
<keyword id="KW-0945">Host-virus interaction</keyword>
<keyword id="KW-0407">Ion channel</keyword>
<keyword id="KW-0406">Ion transport</keyword>
<keyword id="KW-0472">Membrane</keyword>
<keyword id="KW-0479">Metal-binding</keyword>
<keyword id="KW-0964">Secreted</keyword>
<keyword id="KW-0735">Signal-anchor</keyword>
<keyword id="KW-0800">Toxin</keyword>
<keyword id="KW-0812">Transmembrane</keyword>
<keyword id="KW-1133">Transmembrane helix</keyword>
<keyword id="KW-0813">Transport</keyword>
<keyword id="KW-1182">Viral ion channel</keyword>
<keyword id="KW-0843">Virulence</keyword>
<name>NSP4_ROTEH</name>
<feature type="chain" id="PRO_0000369464" description="Non-structural glycoprotein 4">
    <location>
        <begin position="1"/>
        <end position="175"/>
    </location>
</feature>
<feature type="topological domain" description="Lumenal" evidence="1">
    <location>
        <begin position="1"/>
        <end position="28"/>
    </location>
</feature>
<feature type="transmembrane region" description="Helical; Signal-anchor for type III membrane protein" evidence="1">
    <location>
        <begin position="29"/>
        <end position="51"/>
    </location>
</feature>
<feature type="topological domain" description="Cytoplasmic" evidence="1">
    <location>
        <begin position="52"/>
        <end position="175"/>
    </location>
</feature>
<feature type="binding site" evidence="1">
    <location>
        <position position="120"/>
    </location>
    <ligand>
        <name>Ca(2+)</name>
        <dbReference type="ChEBI" id="CHEBI:29108"/>
    </ligand>
</feature>
<feature type="binding site" evidence="1">
    <location>
        <position position="123"/>
    </location>
    <ligand>
        <name>Ca(2+)</name>
        <dbReference type="ChEBI" id="CHEBI:29108"/>
    </ligand>
</feature>
<feature type="glycosylation site" description="N-linked (GlcNAc...) asparagine; by host" evidence="1">
    <location>
        <position position="8"/>
    </location>
</feature>
<feature type="glycosylation site" description="N-linked (GlcNAc...) asparagine; by host" evidence="1">
    <location>
        <position position="18"/>
    </location>
</feature>
<reference key="1">
    <citation type="journal article" date="2000" name="Arch. Virol.">
        <title>Species specificity and interspecies relatedness of NSP4 genetic groups by comparative NSP4 sequence analyses of animal rotaviruses.</title>
        <authorList>
            <person name="Ciarlet M."/>
            <person name="Liprandi F."/>
            <person name="Conner M.E."/>
            <person name="Estes M.K."/>
        </authorList>
    </citation>
    <scope>NUCLEOTIDE SEQUENCE [GENOMIC RNA]</scope>
</reference>
<proteinExistence type="inferred from homology"/>
<evidence type="ECO:0000255" key="1">
    <source>
        <dbReference type="HAMAP-Rule" id="MF_04091"/>
    </source>
</evidence>
<sequence>MDKLTDLNYTLNVITLLNSTLHTILEDPGMAYFPYIASVLTVLFTLHKASIPTMKIALRTSKCSYKVIKYCIVTIFNTLLKLAGYKEQITTKDEIEKQMDRVVKEMRRHLEMIDKLTTREIEQVELLKRIYDKLMIRATDEIDMTKEINQKNVKTLEEWENGKNPYESKEVTAAM</sequence>